<sequence length="667" mass="76246">MKVSDRRKFEKANFDEFESALNNKNDLVHCPSITLFESIPTEVRSFYEDEKSGLIKVVKFRTGAMDRKRSFEKIVVSVMVGKNVQKFLTFVEDEPDFQGGPIPSKYLIPKKINLMVYTLFQVHTLKFNRKDYDTLSLFYLNRGYYNELSFRVLERCYEIASARPNDSSTMRTFTDFVSGTPIVRSLQKSTIRKYGYNLAPYMFLLLHVDELSIFSAYQASLPGEKKVDTERLKRDLCPRKPTEIKYFSQICNDMMNKKDRLGDVLATAQRIRRRYNKNGSSEPRLKTLDGLTSERWIQWLGLESDYHCSFSSTRNAEDVVAGEAASSDHDQKISRVTRKRPREPKSTNDILVAGRKLFGSSFEFRDLHQLRLCHEIYMADTPSVAVQAPPGYGKTELFHLPLIALASKGDVKYVSFLFVPYTVLLANCMIRLGRRGCLNVAPVRNFIEEGCDGVTDLYVGIYDDLASTNFTDRIAAWENIVECTFRTNNVKLGYLIVDEFHNFETEVYRQSQFGGITNLDFDAFEKAIFLSGTAPEAVADAALQRIGLTGLAKKSMDINELKRSEDLSRGLSSYPTRMFNLIKEKSEVPLGHVHKIWKKVESQPEEALKLLLALFEIEPESKAIVVASTTNEVEELACSWRKYFRVVWIHGKLGCCRKGVSHKGVCH</sequence>
<proteinExistence type="evidence at protein level"/>
<keyword id="KW-0067">ATP-binding</keyword>
<keyword id="KW-0547">Nucleotide-binding</keyword>
<keyword id="KW-1185">Reference proteome</keyword>
<comment type="miscellaneous">
    <text evidence="3">Present with 279 molecules/cell in log phase SD medium.</text>
</comment>
<comment type="similarity">
    <text evidence="4">Belongs to the helicase family. Yeast subtelomeric Y' repeat subfamily.</text>
</comment>
<comment type="caution">
    <text evidence="4">Although strongly related to DNA helicases, it lacks the helicase C-terminal domain, suggesting that it has no helicase activity.</text>
</comment>
<name>YB111_YEAST</name>
<reference key="1">
    <citation type="journal article" date="1994" name="EMBO J.">
        <title>Complete DNA sequence of yeast chromosome II.</title>
        <authorList>
            <person name="Feldmann H."/>
            <person name="Aigle M."/>
            <person name="Aljinovic G."/>
            <person name="Andre B."/>
            <person name="Baclet M.C."/>
            <person name="Barthe C."/>
            <person name="Baur A."/>
            <person name="Becam A.-M."/>
            <person name="Biteau N."/>
            <person name="Boles E."/>
            <person name="Brandt T."/>
            <person name="Brendel M."/>
            <person name="Brueckner M."/>
            <person name="Bussereau F."/>
            <person name="Christiansen C."/>
            <person name="Contreras R."/>
            <person name="Crouzet M."/>
            <person name="Cziepluch C."/>
            <person name="Demolis N."/>
            <person name="Delaveau T."/>
            <person name="Doignon F."/>
            <person name="Domdey H."/>
            <person name="Duesterhus S."/>
            <person name="Dubois E."/>
            <person name="Dujon B."/>
            <person name="El Bakkoury M."/>
            <person name="Entian K.-D."/>
            <person name="Feuermann M."/>
            <person name="Fiers W."/>
            <person name="Fobo G.M."/>
            <person name="Fritz C."/>
            <person name="Gassenhuber J."/>
            <person name="Glansdorff N."/>
            <person name="Goffeau A."/>
            <person name="Grivell L.A."/>
            <person name="de Haan M."/>
            <person name="Hein C."/>
            <person name="Herbert C.J."/>
            <person name="Hollenberg C.P."/>
            <person name="Holmstroem K."/>
            <person name="Jacq C."/>
            <person name="Jacquet M."/>
            <person name="Jauniaux J.-C."/>
            <person name="Jonniaux J.-L."/>
            <person name="Kallesoee T."/>
            <person name="Kiesau P."/>
            <person name="Kirchrath L."/>
            <person name="Koetter P."/>
            <person name="Korol S."/>
            <person name="Liebl S."/>
            <person name="Logghe M."/>
            <person name="Lohan A.J.E."/>
            <person name="Louis E.J."/>
            <person name="Li Z.Y."/>
            <person name="Maat M.J."/>
            <person name="Mallet L."/>
            <person name="Mannhaupt G."/>
            <person name="Messenguy F."/>
            <person name="Miosga T."/>
            <person name="Molemans F."/>
            <person name="Mueller S."/>
            <person name="Nasr F."/>
            <person name="Obermaier B."/>
            <person name="Perea J."/>
            <person name="Pierard A."/>
            <person name="Piravandi E."/>
            <person name="Pohl F.M."/>
            <person name="Pohl T.M."/>
            <person name="Potier S."/>
            <person name="Proft M."/>
            <person name="Purnelle B."/>
            <person name="Ramezani Rad M."/>
            <person name="Rieger M."/>
            <person name="Rose M."/>
            <person name="Schaaff-Gerstenschlaeger I."/>
            <person name="Scherens B."/>
            <person name="Schwarzlose C."/>
            <person name="Skala J."/>
            <person name="Slonimski P.P."/>
            <person name="Smits P.H.M."/>
            <person name="Souciet J.-L."/>
            <person name="Steensma H.Y."/>
            <person name="Stucka R."/>
            <person name="Urrestarazu L.A."/>
            <person name="van der Aart Q.J.M."/>
            <person name="Van Dyck L."/>
            <person name="Vassarotti A."/>
            <person name="Vetter I."/>
            <person name="Vierendeels F."/>
            <person name="Vissers S."/>
            <person name="Wagner G."/>
            <person name="de Wergifosse P."/>
            <person name="Wolfe K.H."/>
            <person name="Zagulski M."/>
            <person name="Zimmermann F.K."/>
            <person name="Mewes H.-W."/>
            <person name="Kleine K."/>
        </authorList>
    </citation>
    <scope>NUCLEOTIDE SEQUENCE [LARGE SCALE GENOMIC DNA]</scope>
    <source>
        <strain>ATCC 204508 / S288c</strain>
    </source>
</reference>
<reference key="2">
    <citation type="journal article" date="2014" name="G3 (Bethesda)">
        <title>The reference genome sequence of Saccharomyces cerevisiae: Then and now.</title>
        <authorList>
            <person name="Engel S.R."/>
            <person name="Dietrich F.S."/>
            <person name="Fisk D.G."/>
            <person name="Binkley G."/>
            <person name="Balakrishnan R."/>
            <person name="Costanzo M.C."/>
            <person name="Dwight S.S."/>
            <person name="Hitz B.C."/>
            <person name="Karra K."/>
            <person name="Nash R.S."/>
            <person name="Weng S."/>
            <person name="Wong E.D."/>
            <person name="Lloyd P."/>
            <person name="Skrzypek M.S."/>
            <person name="Miyasato S.R."/>
            <person name="Simison M."/>
            <person name="Cherry J.M."/>
        </authorList>
    </citation>
    <scope>GENOME REANNOTATION</scope>
    <source>
        <strain>ATCC 204508 / S288c</strain>
    </source>
</reference>
<reference key="3">
    <citation type="journal article" date="2003" name="Nature">
        <title>Global analysis of protein expression in yeast.</title>
        <authorList>
            <person name="Ghaemmaghami S."/>
            <person name="Huh W.-K."/>
            <person name="Bower K."/>
            <person name="Howson R.W."/>
            <person name="Belle A."/>
            <person name="Dephoure N."/>
            <person name="O'Shea E.K."/>
            <person name="Weissman J.S."/>
        </authorList>
    </citation>
    <scope>LEVEL OF PROTEIN EXPRESSION [LARGE SCALE ANALYSIS]</scope>
</reference>
<gene>
    <name type="ordered locus">YBL111C</name>
</gene>
<dbReference type="EMBL" id="Y08934">
    <property type="status" value="NOT_ANNOTATED_CDS"/>
    <property type="molecule type" value="Genomic_DNA"/>
</dbReference>
<dbReference type="EMBL" id="BK006936">
    <property type="protein sequence ID" value="DAA07014.1"/>
    <property type="molecule type" value="Genomic_DNA"/>
</dbReference>
<dbReference type="RefSeq" id="NP_009439.1">
    <property type="nucleotide sequence ID" value="NM_001180052.1"/>
</dbReference>
<dbReference type="BioGRID" id="32593">
    <property type="interactions" value="22"/>
</dbReference>
<dbReference type="FunCoup" id="Q3E7Y5">
    <property type="interactions" value="67"/>
</dbReference>
<dbReference type="IntAct" id="Q3E7Y5">
    <property type="interactions" value="9"/>
</dbReference>
<dbReference type="MINT" id="Q3E7Y5"/>
<dbReference type="STRING" id="4932.YBL111C"/>
<dbReference type="PaxDb" id="4932-YBL111C"/>
<dbReference type="PeptideAtlas" id="Q3E7Y5"/>
<dbReference type="EnsemblFungi" id="YBL111C_mRNA">
    <property type="protein sequence ID" value="YBL111C"/>
    <property type="gene ID" value="YBL111C"/>
</dbReference>
<dbReference type="GeneID" id="852161"/>
<dbReference type="KEGG" id="sce:YBL111C"/>
<dbReference type="AGR" id="SGD:S000002151"/>
<dbReference type="SGD" id="S000002151">
    <property type="gene designation" value="YBL111C"/>
</dbReference>
<dbReference type="VEuPathDB" id="FungiDB:YBL111C"/>
<dbReference type="eggNOG" id="ENOG502QWCT">
    <property type="taxonomic scope" value="Eukaryota"/>
</dbReference>
<dbReference type="GeneTree" id="ENSGT00940000153173"/>
<dbReference type="HOGENOM" id="CLU_411727_0_0_1"/>
<dbReference type="InParanoid" id="Q3E7Y5"/>
<dbReference type="OrthoDB" id="4070277at2759"/>
<dbReference type="BioCyc" id="YEAST:G3O-29223-MONOMER"/>
<dbReference type="PRO" id="PR:Q3E7Y5"/>
<dbReference type="Proteomes" id="UP000002311">
    <property type="component" value="Chromosome II"/>
</dbReference>
<dbReference type="RNAct" id="Q3E7Y5">
    <property type="molecule type" value="protein"/>
</dbReference>
<dbReference type="GO" id="GO:0005739">
    <property type="term" value="C:mitochondrion"/>
    <property type="evidence" value="ECO:0007005"/>
    <property type="project" value="SGD"/>
</dbReference>
<dbReference type="GO" id="GO:0005524">
    <property type="term" value="F:ATP binding"/>
    <property type="evidence" value="ECO:0007669"/>
    <property type="project" value="UniProtKB-KW"/>
</dbReference>
<dbReference type="GO" id="GO:0003676">
    <property type="term" value="F:nucleic acid binding"/>
    <property type="evidence" value="ECO:0007669"/>
    <property type="project" value="InterPro"/>
</dbReference>
<dbReference type="FunFam" id="3.40.50.300:FF:001914">
    <property type="entry name" value="YML133C-like protein"/>
    <property type="match status" value="1"/>
</dbReference>
<dbReference type="Gene3D" id="3.40.50.300">
    <property type="entry name" value="P-loop containing nucleotide triphosphate hydrolases"/>
    <property type="match status" value="1"/>
</dbReference>
<dbReference type="InterPro" id="IPR011545">
    <property type="entry name" value="DEAD/DEAH_box_helicase_dom"/>
</dbReference>
<dbReference type="InterPro" id="IPR014001">
    <property type="entry name" value="Helicase_ATP-bd"/>
</dbReference>
<dbReference type="InterPro" id="IPR027417">
    <property type="entry name" value="P-loop_NTPase"/>
</dbReference>
<dbReference type="InterPro" id="IPR021646">
    <property type="entry name" value="Sir1_ORC-binding"/>
</dbReference>
<dbReference type="InterPro" id="IPR050978">
    <property type="entry name" value="Y'_ATP-dependent_helicase"/>
</dbReference>
<dbReference type="PANTHER" id="PTHR31583">
    <property type="match status" value="1"/>
</dbReference>
<dbReference type="PANTHER" id="PTHR31583:SF2">
    <property type="match status" value="1"/>
</dbReference>
<dbReference type="Pfam" id="PF00270">
    <property type="entry name" value="DEAD"/>
    <property type="match status" value="1"/>
</dbReference>
<dbReference type="Pfam" id="PF11603">
    <property type="entry name" value="Sir1"/>
    <property type="match status" value="1"/>
</dbReference>
<dbReference type="SMART" id="SM00487">
    <property type="entry name" value="DEXDc"/>
    <property type="match status" value="1"/>
</dbReference>
<dbReference type="SUPFAM" id="SSF52540">
    <property type="entry name" value="P-loop containing nucleoside triphosphate hydrolases"/>
    <property type="match status" value="1"/>
</dbReference>
<organism>
    <name type="scientific">Saccharomyces cerevisiae (strain ATCC 204508 / S288c)</name>
    <name type="common">Baker's yeast</name>
    <dbReference type="NCBI Taxonomy" id="559292"/>
    <lineage>
        <taxon>Eukaryota</taxon>
        <taxon>Fungi</taxon>
        <taxon>Dikarya</taxon>
        <taxon>Ascomycota</taxon>
        <taxon>Saccharomycotina</taxon>
        <taxon>Saccharomycetes</taxon>
        <taxon>Saccharomycetales</taxon>
        <taxon>Saccharomycetaceae</taxon>
        <taxon>Saccharomyces</taxon>
    </lineage>
</organism>
<accession>Q3E7Y5</accession>
<accession>D6VPP4</accession>
<protein>
    <recommendedName>
        <fullName>Uncharacterized helicase-like protein YBL111C</fullName>
    </recommendedName>
</protein>
<feature type="chain" id="PRO_0000248406" description="Uncharacterized helicase-like protein YBL111C">
    <location>
        <begin position="1"/>
        <end position="667"/>
    </location>
</feature>
<feature type="domain" description="Helicase ATP-binding">
    <location>
        <begin position="375"/>
        <end position="552"/>
    </location>
</feature>
<feature type="region of interest" description="Disordered" evidence="2">
    <location>
        <begin position="321"/>
        <end position="345"/>
    </location>
</feature>
<feature type="short sequence motif" description="DEAH box">
    <location>
        <begin position="498"/>
        <end position="501"/>
    </location>
</feature>
<feature type="binding site" evidence="1">
    <location>
        <begin position="388"/>
        <end position="395"/>
    </location>
    <ligand>
        <name>ATP</name>
        <dbReference type="ChEBI" id="CHEBI:30616"/>
    </ligand>
</feature>
<evidence type="ECO:0000255" key="1"/>
<evidence type="ECO:0000256" key="2">
    <source>
        <dbReference type="SAM" id="MobiDB-lite"/>
    </source>
</evidence>
<evidence type="ECO:0000269" key="3">
    <source>
    </source>
</evidence>
<evidence type="ECO:0000305" key="4"/>